<gene>
    <name type="primary">exbD</name>
    <name type="ordered locus">NMA1983</name>
</gene>
<keyword id="KW-0997">Cell inner membrane</keyword>
<keyword id="KW-1003">Cell membrane</keyword>
<keyword id="KW-0472">Membrane</keyword>
<keyword id="KW-0653">Protein transport</keyword>
<keyword id="KW-0812">Transmembrane</keyword>
<keyword id="KW-1133">Transmembrane helix</keyword>
<keyword id="KW-0813">Transport</keyword>
<proteinExistence type="inferred from homology"/>
<sequence length="144" mass="15514">MAFGSMNSGDDSPMSDINVTPLVDVMLVLLIVFMITMPVLTHSIPLELPTASEQTNKQDKQPKDPLRLTIDANGGYYVGGDSASKVEIGEVESRLKAAKEQNENVIVAIAADKAVEYDYVNKALEAARQAGITKIGFVTETKAQ</sequence>
<reference key="1">
    <citation type="journal article" date="2000" name="Nature">
        <title>Complete DNA sequence of a serogroup A strain of Neisseria meningitidis Z2491.</title>
        <authorList>
            <person name="Parkhill J."/>
            <person name="Achtman M."/>
            <person name="James K.D."/>
            <person name="Bentley S.D."/>
            <person name="Churcher C.M."/>
            <person name="Klee S.R."/>
            <person name="Morelli G."/>
            <person name="Basham D."/>
            <person name="Brown D."/>
            <person name="Chillingworth T."/>
            <person name="Davies R.M."/>
            <person name="Davis P."/>
            <person name="Devlin K."/>
            <person name="Feltwell T."/>
            <person name="Hamlin N."/>
            <person name="Holroyd S."/>
            <person name="Jagels K."/>
            <person name="Leather S."/>
            <person name="Moule S."/>
            <person name="Mungall K.L."/>
            <person name="Quail M.A."/>
            <person name="Rajandream M.A."/>
            <person name="Rutherford K.M."/>
            <person name="Simmonds M."/>
            <person name="Skelton J."/>
            <person name="Whitehead S."/>
            <person name="Spratt B.G."/>
            <person name="Barrell B.G."/>
        </authorList>
    </citation>
    <scope>NUCLEOTIDE SEQUENCE [LARGE SCALE GENOMIC DNA]</scope>
    <source>
        <strain>DSM 15465 / Z2491</strain>
    </source>
</reference>
<accession>P0A0R8</accession>
<accession>A1ITH7</accession>
<accession>P95376</accession>
<organism>
    <name type="scientific">Neisseria meningitidis serogroup A / serotype 4A (strain DSM 15465 / Z2491)</name>
    <dbReference type="NCBI Taxonomy" id="122587"/>
    <lineage>
        <taxon>Bacteria</taxon>
        <taxon>Pseudomonadati</taxon>
        <taxon>Pseudomonadota</taxon>
        <taxon>Betaproteobacteria</taxon>
        <taxon>Neisseriales</taxon>
        <taxon>Neisseriaceae</taxon>
        <taxon>Neisseria</taxon>
    </lineage>
</organism>
<evidence type="ECO:0000250" key="1"/>
<evidence type="ECO:0000255" key="2"/>
<evidence type="ECO:0000305" key="3"/>
<comment type="function">
    <text evidence="1">Involved in the TonB-dependent energy-dependent transport of various receptor-bound substrates.</text>
</comment>
<comment type="subunit">
    <text evidence="1">The accessory proteins ExbB and ExbD seem to form a complex with TonB.</text>
</comment>
<comment type="subcellular location">
    <subcellularLocation>
        <location evidence="3">Cell inner membrane</location>
        <topology evidence="3">Single-pass type II membrane protein</topology>
    </subcellularLocation>
</comment>
<comment type="similarity">
    <text evidence="3">Belongs to the ExbD/TolR family.</text>
</comment>
<name>EXBD_NEIMA</name>
<feature type="chain" id="PRO_0000129125" description="Biopolymer transport protein ExbD">
    <location>
        <begin position="1"/>
        <end position="144"/>
    </location>
</feature>
<feature type="topological domain" description="Cytoplasmic" evidence="2">
    <location>
        <begin position="1"/>
        <end position="18"/>
    </location>
</feature>
<feature type="transmembrane region" description="Helical" evidence="2">
    <location>
        <begin position="19"/>
        <end position="39"/>
    </location>
</feature>
<feature type="topological domain" description="Periplasmic" evidence="2">
    <location>
        <begin position="40"/>
        <end position="144"/>
    </location>
</feature>
<protein>
    <recommendedName>
        <fullName>Biopolymer transport protein ExbD</fullName>
    </recommendedName>
</protein>
<dbReference type="EMBL" id="AL157959">
    <property type="protein sequence ID" value="CAM09092.1"/>
    <property type="molecule type" value="Genomic_DNA"/>
</dbReference>
<dbReference type="PIR" id="G81048">
    <property type="entry name" value="G81048"/>
</dbReference>
<dbReference type="RefSeq" id="WP_002212592.1">
    <property type="nucleotide sequence ID" value="NC_003116.1"/>
</dbReference>
<dbReference type="SMR" id="P0A0R8"/>
<dbReference type="EnsemblBacteria" id="CAM09092">
    <property type="protein sequence ID" value="CAM09092"/>
    <property type="gene ID" value="NMA1983"/>
</dbReference>
<dbReference type="KEGG" id="nma:NMA1983"/>
<dbReference type="HOGENOM" id="CLU_085305_1_1_4"/>
<dbReference type="Proteomes" id="UP000000626">
    <property type="component" value="Chromosome"/>
</dbReference>
<dbReference type="GO" id="GO:0005886">
    <property type="term" value="C:plasma membrane"/>
    <property type="evidence" value="ECO:0007669"/>
    <property type="project" value="UniProtKB-SubCell"/>
</dbReference>
<dbReference type="GO" id="GO:0022857">
    <property type="term" value="F:transmembrane transporter activity"/>
    <property type="evidence" value="ECO:0007669"/>
    <property type="project" value="InterPro"/>
</dbReference>
<dbReference type="GO" id="GO:0015031">
    <property type="term" value="P:protein transport"/>
    <property type="evidence" value="ECO:0007669"/>
    <property type="project" value="UniProtKB-KW"/>
</dbReference>
<dbReference type="Gene3D" id="3.30.420.270">
    <property type="match status" value="1"/>
</dbReference>
<dbReference type="InterPro" id="IPR003400">
    <property type="entry name" value="ExbD"/>
</dbReference>
<dbReference type="PANTHER" id="PTHR30558:SF12">
    <property type="entry name" value="BIOPOLYMER TRANSPORT PROTEIN EXBD"/>
    <property type="match status" value="1"/>
</dbReference>
<dbReference type="PANTHER" id="PTHR30558">
    <property type="entry name" value="EXBD MEMBRANE COMPONENT OF PMF-DRIVEN MACROMOLECULE IMPORT SYSTEM"/>
    <property type="match status" value="1"/>
</dbReference>
<dbReference type="Pfam" id="PF02472">
    <property type="entry name" value="ExbD"/>
    <property type="match status" value="1"/>
</dbReference>